<accession>Q9Z132</accession>
<accession>Q3V1S3</accession>
<reference key="1">
    <citation type="journal article" date="2004" name="Biochim. Biophys. Acta">
        <title>R-spondin, a novel gene with thrombospondin type 1 domain, was expressed in the dorsal neural tube and affected in Wnts mutants.</title>
        <authorList>
            <person name="Kamata T."/>
            <person name="Katsube K."/>
            <person name="Michikawa M."/>
            <person name="Yamada M."/>
            <person name="Takada S."/>
            <person name="Mizusawa H."/>
        </authorList>
    </citation>
    <scope>NUCLEOTIDE SEQUENCE [MRNA]</scope>
    <scope>SUBCELLULAR LOCATION</scope>
    <scope>TISSUE SPECIFICITY</scope>
    <scope>DEVELOPMENTAL STAGE</scope>
</reference>
<reference key="2">
    <citation type="journal article" date="2005" name="Science">
        <title>The transcriptional landscape of the mammalian genome.</title>
        <authorList>
            <person name="Carninci P."/>
            <person name="Kasukawa T."/>
            <person name="Katayama S."/>
            <person name="Gough J."/>
            <person name="Frith M.C."/>
            <person name="Maeda N."/>
            <person name="Oyama R."/>
            <person name="Ravasi T."/>
            <person name="Lenhard B."/>
            <person name="Wells C."/>
            <person name="Kodzius R."/>
            <person name="Shimokawa K."/>
            <person name="Bajic V.B."/>
            <person name="Brenner S.E."/>
            <person name="Batalov S."/>
            <person name="Forrest A.R."/>
            <person name="Zavolan M."/>
            <person name="Davis M.J."/>
            <person name="Wilming L.G."/>
            <person name="Aidinis V."/>
            <person name="Allen J.E."/>
            <person name="Ambesi-Impiombato A."/>
            <person name="Apweiler R."/>
            <person name="Aturaliya R.N."/>
            <person name="Bailey T.L."/>
            <person name="Bansal M."/>
            <person name="Baxter L."/>
            <person name="Beisel K.W."/>
            <person name="Bersano T."/>
            <person name="Bono H."/>
            <person name="Chalk A.M."/>
            <person name="Chiu K.P."/>
            <person name="Choudhary V."/>
            <person name="Christoffels A."/>
            <person name="Clutterbuck D.R."/>
            <person name="Crowe M.L."/>
            <person name="Dalla E."/>
            <person name="Dalrymple B.P."/>
            <person name="de Bono B."/>
            <person name="Della Gatta G."/>
            <person name="di Bernardo D."/>
            <person name="Down T."/>
            <person name="Engstrom P."/>
            <person name="Fagiolini M."/>
            <person name="Faulkner G."/>
            <person name="Fletcher C.F."/>
            <person name="Fukushima T."/>
            <person name="Furuno M."/>
            <person name="Futaki S."/>
            <person name="Gariboldi M."/>
            <person name="Georgii-Hemming P."/>
            <person name="Gingeras T.R."/>
            <person name="Gojobori T."/>
            <person name="Green R.E."/>
            <person name="Gustincich S."/>
            <person name="Harbers M."/>
            <person name="Hayashi Y."/>
            <person name="Hensch T.K."/>
            <person name="Hirokawa N."/>
            <person name="Hill D."/>
            <person name="Huminiecki L."/>
            <person name="Iacono M."/>
            <person name="Ikeo K."/>
            <person name="Iwama A."/>
            <person name="Ishikawa T."/>
            <person name="Jakt M."/>
            <person name="Kanapin A."/>
            <person name="Katoh M."/>
            <person name="Kawasawa Y."/>
            <person name="Kelso J."/>
            <person name="Kitamura H."/>
            <person name="Kitano H."/>
            <person name="Kollias G."/>
            <person name="Krishnan S.P."/>
            <person name="Kruger A."/>
            <person name="Kummerfeld S.K."/>
            <person name="Kurochkin I.V."/>
            <person name="Lareau L.F."/>
            <person name="Lazarevic D."/>
            <person name="Lipovich L."/>
            <person name="Liu J."/>
            <person name="Liuni S."/>
            <person name="McWilliam S."/>
            <person name="Madan Babu M."/>
            <person name="Madera M."/>
            <person name="Marchionni L."/>
            <person name="Matsuda H."/>
            <person name="Matsuzawa S."/>
            <person name="Miki H."/>
            <person name="Mignone F."/>
            <person name="Miyake S."/>
            <person name="Morris K."/>
            <person name="Mottagui-Tabar S."/>
            <person name="Mulder N."/>
            <person name="Nakano N."/>
            <person name="Nakauchi H."/>
            <person name="Ng P."/>
            <person name="Nilsson R."/>
            <person name="Nishiguchi S."/>
            <person name="Nishikawa S."/>
            <person name="Nori F."/>
            <person name="Ohara O."/>
            <person name="Okazaki Y."/>
            <person name="Orlando V."/>
            <person name="Pang K.C."/>
            <person name="Pavan W.J."/>
            <person name="Pavesi G."/>
            <person name="Pesole G."/>
            <person name="Petrovsky N."/>
            <person name="Piazza S."/>
            <person name="Reed J."/>
            <person name="Reid J.F."/>
            <person name="Ring B.Z."/>
            <person name="Ringwald M."/>
            <person name="Rost B."/>
            <person name="Ruan Y."/>
            <person name="Salzberg S.L."/>
            <person name="Sandelin A."/>
            <person name="Schneider C."/>
            <person name="Schoenbach C."/>
            <person name="Sekiguchi K."/>
            <person name="Semple C.A."/>
            <person name="Seno S."/>
            <person name="Sessa L."/>
            <person name="Sheng Y."/>
            <person name="Shibata Y."/>
            <person name="Shimada H."/>
            <person name="Shimada K."/>
            <person name="Silva D."/>
            <person name="Sinclair B."/>
            <person name="Sperling S."/>
            <person name="Stupka E."/>
            <person name="Sugiura K."/>
            <person name="Sultana R."/>
            <person name="Takenaka Y."/>
            <person name="Taki K."/>
            <person name="Tammoja K."/>
            <person name="Tan S.L."/>
            <person name="Tang S."/>
            <person name="Taylor M.S."/>
            <person name="Tegner J."/>
            <person name="Teichmann S.A."/>
            <person name="Ueda H.R."/>
            <person name="van Nimwegen E."/>
            <person name="Verardo R."/>
            <person name="Wei C.L."/>
            <person name="Yagi K."/>
            <person name="Yamanishi H."/>
            <person name="Zabarovsky E."/>
            <person name="Zhu S."/>
            <person name="Zimmer A."/>
            <person name="Hide W."/>
            <person name="Bult C."/>
            <person name="Grimmond S.M."/>
            <person name="Teasdale R.D."/>
            <person name="Liu E.T."/>
            <person name="Brusic V."/>
            <person name="Quackenbush J."/>
            <person name="Wahlestedt C."/>
            <person name="Mattick J.S."/>
            <person name="Hume D.A."/>
            <person name="Kai C."/>
            <person name="Sasaki D."/>
            <person name="Tomaru Y."/>
            <person name="Fukuda S."/>
            <person name="Kanamori-Katayama M."/>
            <person name="Suzuki M."/>
            <person name="Aoki J."/>
            <person name="Arakawa T."/>
            <person name="Iida J."/>
            <person name="Imamura K."/>
            <person name="Itoh M."/>
            <person name="Kato T."/>
            <person name="Kawaji H."/>
            <person name="Kawagashira N."/>
            <person name="Kawashima T."/>
            <person name="Kojima M."/>
            <person name="Kondo S."/>
            <person name="Konno H."/>
            <person name="Nakano K."/>
            <person name="Ninomiya N."/>
            <person name="Nishio T."/>
            <person name="Okada M."/>
            <person name="Plessy C."/>
            <person name="Shibata K."/>
            <person name="Shiraki T."/>
            <person name="Suzuki S."/>
            <person name="Tagami M."/>
            <person name="Waki K."/>
            <person name="Watahiki A."/>
            <person name="Okamura-Oho Y."/>
            <person name="Suzuki H."/>
            <person name="Kawai J."/>
            <person name="Hayashizaki Y."/>
        </authorList>
    </citation>
    <scope>NUCLEOTIDE SEQUENCE [LARGE SCALE MRNA]</scope>
    <source>
        <strain>C57BL/6J</strain>
        <tissue>Extraembryonic tissue</tissue>
        <tissue>Placenta</tissue>
    </source>
</reference>
<reference key="3">
    <citation type="journal article" date="2004" name="Dev. Cell">
        <title>R-Spondin2 is a secreted activator of Wnt/beta-catenin signaling and is required for Xenopus myogenesis.</title>
        <authorList>
            <person name="Kazanskaya O."/>
            <person name="Glinka A."/>
            <person name="del Barco Barrantes I."/>
            <person name="Stannek P."/>
            <person name="Niehrs C."/>
            <person name="Wu W."/>
        </authorList>
    </citation>
    <scope>DEVELOPMENTAL STAGE</scope>
</reference>
<reference key="4">
    <citation type="journal article" date="2006" name="J. Biol. Chem.">
        <title>Mouse cristin/R-spondin family proteins are novel ligands for the Frizzled 8 and LRP6 receptors and activate beta-catenin-dependent gene expression.</title>
        <authorList>
            <person name="Nam J.-S."/>
            <person name="Turcotte T.J."/>
            <person name="Smith P.F."/>
            <person name="Choi S."/>
            <person name="Yoon J.K."/>
        </authorList>
    </citation>
    <scope>SUBCELLULAR LOCATION</scope>
    <scope>DEVELOPMENTAL STAGE</scope>
    <scope>HEPARIN-BINDING</scope>
    <scope>INTERACTION WITH FZD8; LRP6 AND WNT1</scope>
</reference>
<reference key="5">
    <citation type="journal article" date="2006" name="Nat. Genet.">
        <title>R-spondin1 is essential in sex determination, skin differentiation and malignancy.</title>
        <authorList>
            <person name="Parma P."/>
            <person name="Radi O."/>
            <person name="Vidal V."/>
            <person name="Chaboissier M.C."/>
            <person name="Dellambra E."/>
            <person name="Valentini S."/>
            <person name="Guerra L."/>
            <person name="Schedl A."/>
            <person name="Camerino G."/>
        </authorList>
    </citation>
    <scope>DEVELOPMENTAL STAGE</scope>
</reference>
<reference key="6">
    <citation type="journal article" date="2011" name="Proc. Natl. Acad. Sci. U.S.A.">
        <title>R-spondins function as ligands of the orphan receptors LGR4 and LGR5 to regulate Wnt/beta-catenin signaling.</title>
        <authorList>
            <person name="Carmon K.S."/>
            <person name="Gong X."/>
            <person name="Lin Q."/>
            <person name="Thomas A."/>
            <person name="Liu Q."/>
        </authorList>
    </citation>
    <scope>FUNCTION</scope>
    <scope>INTERACTION WITH LGR4 AND LGR5</scope>
</reference>
<organism>
    <name type="scientific">Mus musculus</name>
    <name type="common">Mouse</name>
    <dbReference type="NCBI Taxonomy" id="10090"/>
    <lineage>
        <taxon>Eukaryota</taxon>
        <taxon>Metazoa</taxon>
        <taxon>Chordata</taxon>
        <taxon>Craniata</taxon>
        <taxon>Vertebrata</taxon>
        <taxon>Euteleostomi</taxon>
        <taxon>Mammalia</taxon>
        <taxon>Eutheria</taxon>
        <taxon>Euarchontoglires</taxon>
        <taxon>Glires</taxon>
        <taxon>Rodentia</taxon>
        <taxon>Myomorpha</taxon>
        <taxon>Muroidea</taxon>
        <taxon>Muridae</taxon>
        <taxon>Murinae</taxon>
        <taxon>Mus</taxon>
        <taxon>Mus</taxon>
    </lineage>
</organism>
<name>RSPO1_MOUSE</name>
<feature type="signal peptide" evidence="3">
    <location>
        <begin position="1"/>
        <end position="20"/>
    </location>
</feature>
<feature type="chain" id="PRO_0000234437" description="R-spondin-1">
    <location>
        <begin position="21"/>
        <end position="265"/>
    </location>
</feature>
<feature type="repeat" description="FU 1">
    <location>
        <begin position="34"/>
        <end position="85"/>
    </location>
</feature>
<feature type="repeat" description="FU 2">
    <location>
        <begin position="91"/>
        <end position="135"/>
    </location>
</feature>
<feature type="domain" description="TSP type-1" evidence="4">
    <location>
        <begin position="147"/>
        <end position="207"/>
    </location>
</feature>
<feature type="region of interest" description="Disordered" evidence="5">
    <location>
        <begin position="173"/>
        <end position="192"/>
    </location>
</feature>
<feature type="region of interest" description="Disordered" evidence="5">
    <location>
        <begin position="201"/>
        <end position="265"/>
    </location>
</feature>
<feature type="compositionally biased region" description="Low complexity" evidence="5">
    <location>
        <begin position="245"/>
        <end position="257"/>
    </location>
</feature>
<feature type="glycosylation site" description="N-linked (GlcNAc...) asparagine" evidence="2">
    <location>
        <position position="137"/>
    </location>
</feature>
<feature type="glycosylation site" description="C-linked (Man) tryptophan" evidence="2">
    <location>
        <position position="153"/>
    </location>
</feature>
<feature type="glycosylation site" description="C-linked (Man) tryptophan; by DPY19L3" evidence="2">
    <location>
        <position position="156"/>
    </location>
</feature>
<feature type="disulfide bond" evidence="2">
    <location>
        <begin position="40"/>
        <end position="47"/>
    </location>
</feature>
<feature type="disulfide bond" evidence="2">
    <location>
        <begin position="44"/>
        <end position="53"/>
    </location>
</feature>
<feature type="disulfide bond" evidence="2">
    <location>
        <begin position="56"/>
        <end position="75"/>
    </location>
</feature>
<feature type="disulfide bond" evidence="2">
    <location>
        <begin position="79"/>
        <end position="94"/>
    </location>
</feature>
<feature type="disulfide bond" evidence="2">
    <location>
        <begin position="97"/>
        <end position="105"/>
    </location>
</feature>
<feature type="disulfide bond" evidence="2">
    <location>
        <begin position="102"/>
        <end position="111"/>
    </location>
</feature>
<feature type="disulfide bond" evidence="2">
    <location>
        <begin position="114"/>
        <end position="125"/>
    </location>
</feature>
<feature type="disulfide bond" evidence="2">
    <location>
        <begin position="129"/>
        <end position="142"/>
    </location>
</feature>
<feature type="disulfide bond" evidence="4">
    <location>
        <begin position="148"/>
        <end position="190"/>
    </location>
</feature>
<feature type="disulfide bond" evidence="4">
    <location>
        <begin position="159"/>
        <end position="166"/>
    </location>
</feature>
<feature type="disulfide bond" evidence="4">
    <location>
        <begin position="199"/>
        <end position="206"/>
    </location>
</feature>
<feature type="sequence conflict" description="In Ref. 2; BAE21077." evidence="11" ref="2">
    <original>A</original>
    <variation>G</variation>
    <location>
        <position position="117"/>
    </location>
</feature>
<feature type="sequence conflict" description="In Ref. 2; BAE21077." evidence="11" ref="2">
    <original>R</original>
    <variation>G</variation>
    <location>
        <position position="236"/>
    </location>
</feature>
<comment type="function">
    <text evidence="2 10">Activator of the canonical Wnt signaling pathway by acting as a ligand for LGR4-6 receptors. Upon binding to LGR4-6 (LGR4, LGR5 or LGR6), LGR4-6 associate with phosphorylated LRP6 and frizzled receptors that are activated by extracellular Wnt receptors, triggering the canonical Wnt signaling pathway to increase expression of target genes (PubMed:21693646). Also regulates the canonical Wnt/beta-catenin-dependent pathway and non-canonical Wnt signaling by acting as an inhibitor of ZNRF3, an important regulator of the Wnt signaling pathway. Acts as a ligand for frizzled FZD8 and LRP6. May negatively regulate the TGF-beta pathway. Has a essential roles in ovary determination (By similarity). Regulates Wnt signaling by antagonizing DKK1/KREM1-mediated internalization of LRP6 through an interaction with KREM1 (By similarity).</text>
</comment>
<comment type="subunit">
    <text evidence="2 8 10">Interacts with ZNRF3; promoting indirect interaction between ZNRF3 and LGR4 and membrane clearance of ZNRF3. Identified in a complex composed of RNF43, LGR5 and RSPO1 (By similarity). Interacts with the extracellular domain of FZD8 and LRP6. It however does not form a ternary complex with FZD8 and LRP6. Interacts with WNT1. Binds heparin. Interacts with LGR4, LGR5 and LGR6 (PubMed:16543246, PubMed:21693646). Interacts (via FU repeats) with KREM1 (By similarity).</text>
</comment>
<comment type="subcellular location">
    <subcellularLocation>
        <location evidence="8">Secreted</location>
    </subcellularLocation>
    <subcellularLocation>
        <location evidence="6">Nucleus</location>
    </subcellularLocation>
    <text evidence="6">Seems to mainly localize to nucleoli.</text>
</comment>
<comment type="tissue specificity">
    <text evidence="6">Expressed in the dorsal part of the neural tube on 10 and 12 dpc, especially in the boundary region between roof plate and neuroepithelium. This expression is enhanced in the rostral part. Also expressed in other tissues such as truncal region neighboring forelimbs and mesenchymal tissues around the nasal cavity.</text>
</comment>
<comment type="developmental stage">
    <text evidence="6 7 8 9">Transiently expressed in the central nervous system (CNS) during development. Predominantly expressed in the tailbud of embryos. Also detected in the primitive streak, dorsal neural tube, forebrain and migrating neural crests of embryos. Detected from day 9.5, in various neural and mesodermal derivatives, mainly along dorsal neural tube and diencephalon. Strongly expressed in limb buds, particularly in the morphogenetically active region such as the apical ectodermal ridge (AER). The developing skin showed expression in patches of the developing dermis at 12.5 dpc and at lower levels at 14.5 dpc. By 18.5 dpc expression is restricted to the dermal papilla of the developing hair, which persisted into adulthood. In the developing kidney, strong expression at 11.5 dpc in the uninduced metanephric mesenchyme is observed. By 14.5 dpc this expression is restricted to the condensing mesenchyme surrounding the ureter and the developing nephrons. Specific expression in the urogenital ridge as early as 10.5 dpc in the coelomic epithelium. Sex-specific differences of expression began to appear starting at 12.5 dpc, with an increase in the somatic cells of the XX gonad.</text>
</comment>
<comment type="domain">
    <text evidence="1">The FU repeats are required for activation and stabilization of beta-catenin.</text>
</comment>
<comment type="PTM">
    <text evidence="2">C-, and N-glycosylated. N-glycosylation at Asn-137, negatively influences its secretion and enhancing effect on Wnt/beta-catenin signaling. C-mannosylation at Trp-156 by DPY19L3 is required for its secretion an regulates the enhancing activity of Wnt signaling.</text>
</comment>
<comment type="similarity">
    <text evidence="11">Belongs to the R-spondin family.</text>
</comment>
<dbReference type="EMBL" id="AB016768">
    <property type="protein sequence ID" value="BAA75640.1"/>
    <property type="molecule type" value="mRNA"/>
</dbReference>
<dbReference type="EMBL" id="AK132277">
    <property type="protein sequence ID" value="BAE21077.1"/>
    <property type="molecule type" value="mRNA"/>
</dbReference>
<dbReference type="CCDS" id="CCDS18633.1"/>
<dbReference type="RefSeq" id="NP_619624.2">
    <property type="nucleotide sequence ID" value="NM_138683.2"/>
</dbReference>
<dbReference type="SMR" id="Q9Z132"/>
<dbReference type="CORUM" id="Q9Z132"/>
<dbReference type="FunCoup" id="Q9Z132">
    <property type="interactions" value="407"/>
</dbReference>
<dbReference type="STRING" id="10090.ENSMUSP00000030687"/>
<dbReference type="GlyCosmos" id="Q9Z132">
    <property type="glycosylation" value="1 site, No reported glycans"/>
</dbReference>
<dbReference type="GlyGen" id="Q9Z132">
    <property type="glycosylation" value="4 sites"/>
</dbReference>
<dbReference type="PhosphoSitePlus" id="Q9Z132"/>
<dbReference type="PaxDb" id="10090-ENSMUSP00000030687"/>
<dbReference type="ProteomicsDB" id="257045"/>
<dbReference type="DNASU" id="192199"/>
<dbReference type="GeneID" id="192199"/>
<dbReference type="KEGG" id="mmu:192199"/>
<dbReference type="AGR" id="MGI:2183426"/>
<dbReference type="CTD" id="284654"/>
<dbReference type="MGI" id="MGI:2183426">
    <property type="gene designation" value="Rspo1"/>
</dbReference>
<dbReference type="eggNOG" id="KOG3525">
    <property type="taxonomic scope" value="Eukaryota"/>
</dbReference>
<dbReference type="InParanoid" id="Q9Z132"/>
<dbReference type="OrthoDB" id="10257656at2759"/>
<dbReference type="PhylomeDB" id="Q9Z132"/>
<dbReference type="Reactome" id="R-MMU-4641263">
    <property type="pathway name" value="Regulation of FZD by ubiquitination"/>
</dbReference>
<dbReference type="BioGRID-ORCS" id="192199">
    <property type="hits" value="3 hits in 78 CRISPR screens"/>
</dbReference>
<dbReference type="PRO" id="PR:Q9Z132"/>
<dbReference type="Proteomes" id="UP000000589">
    <property type="component" value="Unplaced"/>
</dbReference>
<dbReference type="RNAct" id="Q9Z132">
    <property type="molecule type" value="protein"/>
</dbReference>
<dbReference type="GO" id="GO:0005615">
    <property type="term" value="C:extracellular space"/>
    <property type="evidence" value="ECO:0000314"/>
    <property type="project" value="MGI"/>
</dbReference>
<dbReference type="GO" id="GO:0005634">
    <property type="term" value="C:nucleus"/>
    <property type="evidence" value="ECO:0000314"/>
    <property type="project" value="MGI"/>
</dbReference>
<dbReference type="GO" id="GO:0008201">
    <property type="term" value="F:heparin binding"/>
    <property type="evidence" value="ECO:0000314"/>
    <property type="project" value="MGI"/>
</dbReference>
<dbReference type="GO" id="GO:0005102">
    <property type="term" value="F:signaling receptor binding"/>
    <property type="evidence" value="ECO:0000353"/>
    <property type="project" value="MGI"/>
</dbReference>
<dbReference type="GO" id="GO:0007140">
    <property type="term" value="P:male meiotic nuclear division"/>
    <property type="evidence" value="ECO:0000315"/>
    <property type="project" value="MGI"/>
</dbReference>
<dbReference type="GO" id="GO:0090263">
    <property type="term" value="P:positive regulation of canonical Wnt signaling pathway"/>
    <property type="evidence" value="ECO:0000314"/>
    <property type="project" value="UniProtKB"/>
</dbReference>
<dbReference type="GO" id="GO:2000052">
    <property type="term" value="P:positive regulation of non-canonical Wnt signaling pathway"/>
    <property type="evidence" value="ECO:0000315"/>
    <property type="project" value="MGI"/>
</dbReference>
<dbReference type="GO" id="GO:0030177">
    <property type="term" value="P:positive regulation of Wnt signaling pathway"/>
    <property type="evidence" value="ECO:0000250"/>
    <property type="project" value="UniProtKB"/>
</dbReference>
<dbReference type="GO" id="GO:0010468">
    <property type="term" value="P:regulation of gene expression"/>
    <property type="evidence" value="ECO:0000315"/>
    <property type="project" value="MGI"/>
</dbReference>
<dbReference type="GO" id="GO:2000254">
    <property type="term" value="P:regulation of male germ cell proliferation"/>
    <property type="evidence" value="ECO:0000315"/>
    <property type="project" value="MGI"/>
</dbReference>
<dbReference type="GO" id="GO:0016055">
    <property type="term" value="P:Wnt signaling pathway"/>
    <property type="evidence" value="ECO:0007669"/>
    <property type="project" value="UniProtKB-KW"/>
</dbReference>
<dbReference type="CDD" id="cd00064">
    <property type="entry name" value="FU"/>
    <property type="match status" value="1"/>
</dbReference>
<dbReference type="FunFam" id="2.20.100.10:FF:000056">
    <property type="entry name" value="R-spondin 1"/>
    <property type="match status" value="1"/>
</dbReference>
<dbReference type="FunFam" id="2.10.220.10:FF:000003">
    <property type="entry name" value="R-spondin 3"/>
    <property type="match status" value="1"/>
</dbReference>
<dbReference type="Gene3D" id="2.10.220.10">
    <property type="entry name" value="Hormone Receptor, Insulin-like Growth Factor Receptor 1, Chain A, domain 2"/>
    <property type="match status" value="1"/>
</dbReference>
<dbReference type="Gene3D" id="2.20.100.10">
    <property type="entry name" value="Thrombospondin type-1 (TSP1) repeat"/>
    <property type="match status" value="1"/>
</dbReference>
<dbReference type="InterPro" id="IPR006212">
    <property type="entry name" value="Furin_repeat"/>
</dbReference>
<dbReference type="InterPro" id="IPR009030">
    <property type="entry name" value="Growth_fac_rcpt_cys_sf"/>
</dbReference>
<dbReference type="InterPro" id="IPR051514">
    <property type="entry name" value="R-spondin"/>
</dbReference>
<dbReference type="InterPro" id="IPR043601">
    <property type="entry name" value="Rspo_Fu-CRD_dom"/>
</dbReference>
<dbReference type="InterPro" id="IPR000884">
    <property type="entry name" value="TSP1_rpt"/>
</dbReference>
<dbReference type="InterPro" id="IPR036383">
    <property type="entry name" value="TSP1_rpt_sf"/>
</dbReference>
<dbReference type="PANTHER" id="PTHR46987">
    <property type="entry name" value="NEUROHYPOPHYSIAL HORMONES, N-TERMINAL DOMAIN CONTAINING PROTEIN"/>
    <property type="match status" value="1"/>
</dbReference>
<dbReference type="PANTHER" id="PTHR46987:SF5">
    <property type="entry name" value="R-SPONDIN-1"/>
    <property type="match status" value="1"/>
</dbReference>
<dbReference type="Pfam" id="PF15913">
    <property type="entry name" value="Furin-like_2"/>
    <property type="match status" value="1"/>
</dbReference>
<dbReference type="Pfam" id="PF00090">
    <property type="entry name" value="TSP_1"/>
    <property type="match status" value="1"/>
</dbReference>
<dbReference type="SMART" id="SM00261">
    <property type="entry name" value="FU"/>
    <property type="match status" value="2"/>
</dbReference>
<dbReference type="SMART" id="SM00209">
    <property type="entry name" value="TSP1"/>
    <property type="match status" value="1"/>
</dbReference>
<dbReference type="SUPFAM" id="SSF57184">
    <property type="entry name" value="Growth factor receptor domain"/>
    <property type="match status" value="1"/>
</dbReference>
<dbReference type="SUPFAM" id="SSF82895">
    <property type="entry name" value="TSP-1 type 1 repeat"/>
    <property type="match status" value="1"/>
</dbReference>
<dbReference type="PROSITE" id="PS50092">
    <property type="entry name" value="TSP1"/>
    <property type="match status" value="1"/>
</dbReference>
<gene>
    <name type="primary">Rspo1</name>
</gene>
<keyword id="KW-1015">Disulfide bond</keyword>
<keyword id="KW-0325">Glycoprotein</keyword>
<keyword id="KW-0358">Heparin-binding</keyword>
<keyword id="KW-0539">Nucleus</keyword>
<keyword id="KW-1185">Reference proteome</keyword>
<keyword id="KW-0677">Repeat</keyword>
<keyword id="KW-0964">Secreted</keyword>
<keyword id="KW-0716">Sensory transduction</keyword>
<keyword id="KW-0732">Signal</keyword>
<keyword id="KW-0879">Wnt signaling pathway</keyword>
<sequence>MRLGLCVVALVLSWTHIAVGSRGIKGKRQRRISAEGSQACAKGCELCSEVNGCLKCSPKLFILLERNDIRQVGVCLPSCPPGYFDARNPDMNKCIKCKIEHCEACFSHNFCTKCQEALYLHKGRCYPACPEGSTAANSTMECGSPAQCEMSEWSPWGPCSKKRKLCGFRKGSEERTRRVLHAPGGDHTTCSDTKETRKCTVRRTPCPEGQKRRKGGQGRRENANRHPARKNSKEPRSNSRRHKGQQQPQPGTTGPLTSVGPTWAQ</sequence>
<evidence type="ECO:0000250" key="1"/>
<evidence type="ECO:0000250" key="2">
    <source>
        <dbReference type="UniProtKB" id="Q2MKA7"/>
    </source>
</evidence>
<evidence type="ECO:0000255" key="3"/>
<evidence type="ECO:0000255" key="4">
    <source>
        <dbReference type="PROSITE-ProRule" id="PRU00210"/>
    </source>
</evidence>
<evidence type="ECO:0000256" key="5">
    <source>
        <dbReference type="SAM" id="MobiDB-lite"/>
    </source>
</evidence>
<evidence type="ECO:0000269" key="6">
    <source>
    </source>
</evidence>
<evidence type="ECO:0000269" key="7">
    <source>
    </source>
</evidence>
<evidence type="ECO:0000269" key="8">
    <source>
    </source>
</evidence>
<evidence type="ECO:0000269" key="9">
    <source>
    </source>
</evidence>
<evidence type="ECO:0000269" key="10">
    <source>
    </source>
</evidence>
<evidence type="ECO:0000305" key="11"/>
<proteinExistence type="evidence at protein level"/>
<protein>
    <recommendedName>
        <fullName>R-spondin-1</fullName>
    </recommendedName>
    <alternativeName>
        <fullName>Cysteine-rich and single thrombospondin domain-containing protein 3</fullName>
        <shortName>Cristin-3</shortName>
        <shortName>mCristin-3</shortName>
    </alternativeName>
    <alternativeName>
        <fullName>Roof plate-specific spondin-1</fullName>
    </alternativeName>
</protein>